<proteinExistence type="inferred from homology"/>
<evidence type="ECO:0000250" key="1">
    <source>
        <dbReference type="UniProtKB" id="Q6P587"/>
    </source>
</evidence>
<evidence type="ECO:0000305" key="2"/>
<reference key="1">
    <citation type="journal article" date="2009" name="J. Bacteriol.">
        <title>The genome of Burkholderia cenocepacia J2315, an epidemic pathogen of cystic fibrosis patients.</title>
        <authorList>
            <person name="Holden M.T."/>
            <person name="Seth-Smith H.M."/>
            <person name="Crossman L.C."/>
            <person name="Sebaihia M."/>
            <person name="Bentley S.D."/>
            <person name="Cerdeno-Tarraga A.M."/>
            <person name="Thomson N.R."/>
            <person name="Bason N."/>
            <person name="Quail M.A."/>
            <person name="Sharp S."/>
            <person name="Cherevach I."/>
            <person name="Churcher C."/>
            <person name="Goodhead I."/>
            <person name="Hauser H."/>
            <person name="Holroyd N."/>
            <person name="Mungall K."/>
            <person name="Scott P."/>
            <person name="Walker D."/>
            <person name="White B."/>
            <person name="Rose H."/>
            <person name="Iversen P."/>
            <person name="Mil-Homens D."/>
            <person name="Rocha E.P."/>
            <person name="Fialho A.M."/>
            <person name="Baldwin A."/>
            <person name="Dowson C."/>
            <person name="Barrell B.G."/>
            <person name="Govan J.R."/>
            <person name="Vandamme P."/>
            <person name="Hart C.A."/>
            <person name="Mahenthiralingam E."/>
            <person name="Parkhill J."/>
        </authorList>
    </citation>
    <scope>NUCLEOTIDE SEQUENCE [LARGE SCALE GENOMIC DNA]</scope>
    <source>
        <strain>ATCC BAA-245 / DSM 16553 / LMG 16656 / NCTC 13227 / J2315 / CF5610</strain>
    </source>
</reference>
<comment type="cofactor">
    <cofactor evidence="1">
        <name>Mg(2+)</name>
        <dbReference type="ChEBI" id="CHEBI:18420"/>
    </cofactor>
</comment>
<comment type="similarity">
    <text evidence="2">Belongs to the FAH family.</text>
</comment>
<dbReference type="EC" id="3.-.-.-"/>
<dbReference type="EMBL" id="AM747721">
    <property type="protein sequence ID" value="CAR56571.1"/>
    <property type="molecule type" value="Genomic_DNA"/>
</dbReference>
<dbReference type="RefSeq" id="WP_006481667.1">
    <property type="nucleotide sequence ID" value="NC_011001.1"/>
</dbReference>
<dbReference type="SMR" id="B4EKX6"/>
<dbReference type="KEGG" id="bcj:BCAM2707"/>
<dbReference type="eggNOG" id="COG0179">
    <property type="taxonomic scope" value="Bacteria"/>
</dbReference>
<dbReference type="HOGENOM" id="CLU_028458_3_4_4"/>
<dbReference type="BioCyc" id="BCEN216591:G1G1V-6820-MONOMER"/>
<dbReference type="Proteomes" id="UP000001035">
    <property type="component" value="Chromosome 2"/>
</dbReference>
<dbReference type="GO" id="GO:0016787">
    <property type="term" value="F:hydrolase activity"/>
    <property type="evidence" value="ECO:0007669"/>
    <property type="project" value="UniProtKB-KW"/>
</dbReference>
<dbReference type="GO" id="GO:0046872">
    <property type="term" value="F:metal ion binding"/>
    <property type="evidence" value="ECO:0007669"/>
    <property type="project" value="UniProtKB-KW"/>
</dbReference>
<dbReference type="GO" id="GO:0050385">
    <property type="term" value="F:ureidoglycolate lyase activity"/>
    <property type="evidence" value="ECO:0007669"/>
    <property type="project" value="UniProtKB-EC"/>
</dbReference>
<dbReference type="GO" id="GO:0019628">
    <property type="term" value="P:urate catabolic process"/>
    <property type="evidence" value="ECO:0007669"/>
    <property type="project" value="UniProtKB-UniPathway"/>
</dbReference>
<dbReference type="FunFam" id="3.90.850.10:FF:000002">
    <property type="entry name" value="2-hydroxyhepta-2,4-diene-1,7-dioate isomerase"/>
    <property type="match status" value="1"/>
</dbReference>
<dbReference type="Gene3D" id="3.90.850.10">
    <property type="entry name" value="Fumarylacetoacetase-like, C-terminal domain"/>
    <property type="match status" value="1"/>
</dbReference>
<dbReference type="InterPro" id="IPR051121">
    <property type="entry name" value="FAH"/>
</dbReference>
<dbReference type="InterPro" id="IPR011234">
    <property type="entry name" value="Fumarylacetoacetase-like_C"/>
</dbReference>
<dbReference type="InterPro" id="IPR036663">
    <property type="entry name" value="Fumarylacetoacetase_C_sf"/>
</dbReference>
<dbReference type="PANTHER" id="PTHR42796:SF4">
    <property type="entry name" value="FUMARYLACETOACETATE HYDROLASE DOMAIN-CONTAINING PROTEIN 2A"/>
    <property type="match status" value="1"/>
</dbReference>
<dbReference type="PANTHER" id="PTHR42796">
    <property type="entry name" value="FUMARYLACETOACETATE HYDROLASE DOMAIN-CONTAINING PROTEIN 2A-RELATED"/>
    <property type="match status" value="1"/>
</dbReference>
<dbReference type="Pfam" id="PF01557">
    <property type="entry name" value="FAA_hydrolase"/>
    <property type="match status" value="1"/>
</dbReference>
<dbReference type="SUPFAM" id="SSF56529">
    <property type="entry name" value="FAH"/>
    <property type="match status" value="1"/>
</dbReference>
<protein>
    <recommendedName>
        <fullName evidence="2">Putative hydrolase BceJ2315_61450</fullName>
        <ecNumber>3.-.-.-</ecNumber>
    </recommendedName>
</protein>
<gene>
    <name type="ordered locus">BceJ2315_61450</name>
    <name type="ORF">BCAM2707</name>
</gene>
<name>UGL_BURCJ</name>
<organism>
    <name type="scientific">Burkholderia cenocepacia (strain ATCC BAA-245 / DSM 16553 / LMG 16656 / NCTC 13227 / J2315 / CF5610)</name>
    <name type="common">Burkholderia cepacia (strain J2315)</name>
    <dbReference type="NCBI Taxonomy" id="216591"/>
    <lineage>
        <taxon>Bacteria</taxon>
        <taxon>Pseudomonadati</taxon>
        <taxon>Pseudomonadota</taxon>
        <taxon>Betaproteobacteria</taxon>
        <taxon>Burkholderiales</taxon>
        <taxon>Burkholderiaceae</taxon>
        <taxon>Burkholderia</taxon>
        <taxon>Burkholderia cepacia complex</taxon>
    </lineage>
</organism>
<accession>B4EKX6</accession>
<keyword id="KW-0378">Hydrolase</keyword>
<keyword id="KW-0460">Magnesium</keyword>
<keyword id="KW-0479">Metal-binding</keyword>
<sequence>MKLLRYGPPGQEKPGILDAAGRIRDLSAHVPDLAGEVLSDAGLARLRAIDPATLPLVSGEPRIGACVGHVGKFIGIGLNYADHAAEAGMPVPKEPVVFGKWTSSICGPNDGIDIPKGSVKTDWEVELGVVIGAKCKDVDEARALDYVAGYCVVNDVSEREWQIERGGQWDKGKGFDTFGPIGPWLVTRDEVPDPQRLDLWLEIDGHRYQNGNTRTMVFTVAQLIAYLSTCMTLQPGDVITTGTPPGVGMGIKPSPVFLKAGQMVRLGIDGLGEQLQSTRHAQ</sequence>
<feature type="chain" id="PRO_0000371512" description="Putative hydrolase BceJ2315_61450">
    <location>
        <begin position="1"/>
        <end position="282"/>
    </location>
</feature>
<feature type="binding site" evidence="1">
    <location>
        <position position="124"/>
    </location>
    <ligand>
        <name>Mg(2+)</name>
        <dbReference type="ChEBI" id="CHEBI:18420"/>
    </ligand>
</feature>
<feature type="binding site" evidence="1">
    <location>
        <position position="126"/>
    </location>
    <ligand>
        <name>Mg(2+)</name>
        <dbReference type="ChEBI" id="CHEBI:18420"/>
    </ligand>
</feature>
<feature type="binding site" evidence="1">
    <location>
        <position position="155"/>
    </location>
    <ligand>
        <name>Mg(2+)</name>
        <dbReference type="ChEBI" id="CHEBI:18420"/>
    </ligand>
</feature>